<comment type="function">
    <text evidence="1">One of the primary rRNA binding proteins, it binds directly to 16S rRNA where it nucleates assembly of the head domain of the 30S subunit. Is located at the subunit interface close to the decoding center, probably blocks exit of the E-site tRNA.</text>
</comment>
<comment type="subunit">
    <text evidence="1">Part of the 30S ribosomal subunit. Contacts proteins S9 and S11.</text>
</comment>
<comment type="similarity">
    <text evidence="1">Belongs to the universal ribosomal protein uS7 family.</text>
</comment>
<feature type="chain" id="PRO_0000226485" description="Small ribosomal subunit protein uS7">
    <location>
        <begin position="1"/>
        <end position="156"/>
    </location>
</feature>
<gene>
    <name evidence="1" type="primary">rpsG</name>
    <name type="ordered locus">BAB1_1259</name>
</gene>
<reference key="1">
    <citation type="journal article" date="2005" name="Infect. Immun.">
        <title>Whole-genome analyses of speciation events in pathogenic Brucellae.</title>
        <authorList>
            <person name="Chain P.S."/>
            <person name="Comerci D.J."/>
            <person name="Tolmasky M.E."/>
            <person name="Larimer F.W."/>
            <person name="Malfatti S.A."/>
            <person name="Vergez L.M."/>
            <person name="Aguero F."/>
            <person name="Land M.L."/>
            <person name="Ugalde R.A."/>
            <person name="Garcia E."/>
        </authorList>
    </citation>
    <scope>NUCLEOTIDE SEQUENCE [LARGE SCALE GENOMIC DNA]</scope>
    <source>
        <strain>2308</strain>
    </source>
</reference>
<accession>Q2YLZ9</accession>
<dbReference type="EMBL" id="AM040264">
    <property type="protein sequence ID" value="CAJ11215.1"/>
    <property type="molecule type" value="Genomic_DNA"/>
</dbReference>
<dbReference type="RefSeq" id="WP_002964365.1">
    <property type="nucleotide sequence ID" value="NZ_KN046823.1"/>
</dbReference>
<dbReference type="SMR" id="Q2YLZ9"/>
<dbReference type="STRING" id="359391.BAB1_1259"/>
<dbReference type="GeneID" id="97533521"/>
<dbReference type="KEGG" id="bmf:BAB1_1259"/>
<dbReference type="PATRIC" id="fig|359391.11.peg.159"/>
<dbReference type="HOGENOM" id="CLU_072226_1_1_5"/>
<dbReference type="PhylomeDB" id="Q2YLZ9"/>
<dbReference type="Proteomes" id="UP000002719">
    <property type="component" value="Chromosome I"/>
</dbReference>
<dbReference type="GO" id="GO:0015935">
    <property type="term" value="C:small ribosomal subunit"/>
    <property type="evidence" value="ECO:0007669"/>
    <property type="project" value="InterPro"/>
</dbReference>
<dbReference type="GO" id="GO:0019843">
    <property type="term" value="F:rRNA binding"/>
    <property type="evidence" value="ECO:0007669"/>
    <property type="project" value="UniProtKB-UniRule"/>
</dbReference>
<dbReference type="GO" id="GO:0003735">
    <property type="term" value="F:structural constituent of ribosome"/>
    <property type="evidence" value="ECO:0007669"/>
    <property type="project" value="InterPro"/>
</dbReference>
<dbReference type="GO" id="GO:0000049">
    <property type="term" value="F:tRNA binding"/>
    <property type="evidence" value="ECO:0007669"/>
    <property type="project" value="UniProtKB-UniRule"/>
</dbReference>
<dbReference type="GO" id="GO:0006412">
    <property type="term" value="P:translation"/>
    <property type="evidence" value="ECO:0007669"/>
    <property type="project" value="UniProtKB-UniRule"/>
</dbReference>
<dbReference type="CDD" id="cd14869">
    <property type="entry name" value="uS7_Bacteria"/>
    <property type="match status" value="1"/>
</dbReference>
<dbReference type="FunFam" id="1.10.455.10:FF:000001">
    <property type="entry name" value="30S ribosomal protein S7"/>
    <property type="match status" value="1"/>
</dbReference>
<dbReference type="Gene3D" id="1.10.455.10">
    <property type="entry name" value="Ribosomal protein S7 domain"/>
    <property type="match status" value="1"/>
</dbReference>
<dbReference type="HAMAP" id="MF_00480_B">
    <property type="entry name" value="Ribosomal_uS7_B"/>
    <property type="match status" value="1"/>
</dbReference>
<dbReference type="InterPro" id="IPR000235">
    <property type="entry name" value="Ribosomal_uS7"/>
</dbReference>
<dbReference type="InterPro" id="IPR005717">
    <property type="entry name" value="Ribosomal_uS7_bac/org-type"/>
</dbReference>
<dbReference type="InterPro" id="IPR020606">
    <property type="entry name" value="Ribosomal_uS7_CS"/>
</dbReference>
<dbReference type="InterPro" id="IPR023798">
    <property type="entry name" value="Ribosomal_uS7_dom"/>
</dbReference>
<dbReference type="InterPro" id="IPR036823">
    <property type="entry name" value="Ribosomal_uS7_dom_sf"/>
</dbReference>
<dbReference type="NCBIfam" id="TIGR01029">
    <property type="entry name" value="rpsG_bact"/>
    <property type="match status" value="1"/>
</dbReference>
<dbReference type="PANTHER" id="PTHR11205">
    <property type="entry name" value="RIBOSOMAL PROTEIN S7"/>
    <property type="match status" value="1"/>
</dbReference>
<dbReference type="Pfam" id="PF00177">
    <property type="entry name" value="Ribosomal_S7"/>
    <property type="match status" value="1"/>
</dbReference>
<dbReference type="PIRSF" id="PIRSF002122">
    <property type="entry name" value="RPS7p_RPS7a_RPS5e_RPS7o"/>
    <property type="match status" value="1"/>
</dbReference>
<dbReference type="SUPFAM" id="SSF47973">
    <property type="entry name" value="Ribosomal protein S7"/>
    <property type="match status" value="1"/>
</dbReference>
<dbReference type="PROSITE" id="PS00052">
    <property type="entry name" value="RIBOSOMAL_S7"/>
    <property type="match status" value="1"/>
</dbReference>
<organism>
    <name type="scientific">Brucella abortus (strain 2308)</name>
    <dbReference type="NCBI Taxonomy" id="359391"/>
    <lineage>
        <taxon>Bacteria</taxon>
        <taxon>Pseudomonadati</taxon>
        <taxon>Pseudomonadota</taxon>
        <taxon>Alphaproteobacteria</taxon>
        <taxon>Hyphomicrobiales</taxon>
        <taxon>Brucellaceae</taxon>
        <taxon>Brucella/Ochrobactrum group</taxon>
        <taxon>Brucella</taxon>
    </lineage>
</organism>
<protein>
    <recommendedName>
        <fullName evidence="1">Small ribosomal subunit protein uS7</fullName>
    </recommendedName>
    <alternativeName>
        <fullName evidence="2">30S ribosomal protein S7</fullName>
    </alternativeName>
</protein>
<sequence>MSRRHKAEKREINPDPKFGDLVITKFMNAVMLHGKKSVAESIVYGALDAIEAKAKSEPVALFHQALDNVAPHIEVRSRRVGGATYQVPVDVRPERRQALAIRWLINAARGRNETTMVDRLSGELLDAANNRGSAVKKREDTHRMAEANRAFSHYRW</sequence>
<proteinExistence type="inferred from homology"/>
<evidence type="ECO:0000255" key="1">
    <source>
        <dbReference type="HAMAP-Rule" id="MF_00480"/>
    </source>
</evidence>
<evidence type="ECO:0000305" key="2"/>
<name>RS7_BRUA2</name>
<keyword id="KW-1185">Reference proteome</keyword>
<keyword id="KW-0687">Ribonucleoprotein</keyword>
<keyword id="KW-0689">Ribosomal protein</keyword>
<keyword id="KW-0694">RNA-binding</keyword>
<keyword id="KW-0699">rRNA-binding</keyword>
<keyword id="KW-0820">tRNA-binding</keyword>